<evidence type="ECO:0000305" key="1"/>
<protein>
    <recommendedName>
        <fullName>Hydrogenase expression/formation protein HupF</fullName>
    </recommendedName>
</protein>
<reference key="1">
    <citation type="journal article" date="1993" name="J. Mol. Biol.">
        <title>Nucleotide sequence analysis of four genes, hupC, hupD, hupF and hupG, downstream of the hydrogenase structural genes in Bradyrhizobium japonicum.</title>
        <authorList>
            <person name="van Soom C."/>
            <person name="Browaeys J."/>
            <person name="Verreth C."/>
            <person name="Vanderleyden J."/>
        </authorList>
    </citation>
    <scope>NUCLEOTIDE SEQUENCE [GENOMIC DNA]</scope>
</reference>
<reference key="2">
    <citation type="journal article" date="1994" name="Gene">
        <title>Sequence and characterization of three genes within the hydrogenase gene cluster of Bradyrhizobium japonicum.</title>
        <authorList>
            <person name="Fu C."/>
            <person name="Maier R.J."/>
        </authorList>
    </citation>
    <scope>NUCLEOTIDE SEQUENCE [GENOMIC DNA]</scope>
</reference>
<reference key="3">
    <citation type="journal article" date="2002" name="DNA Res.">
        <title>Complete genomic sequence of nitrogen-fixing symbiotic bacterium Bradyrhizobium japonicum USDA110.</title>
        <authorList>
            <person name="Kaneko T."/>
            <person name="Nakamura Y."/>
            <person name="Sato S."/>
            <person name="Minamisawa K."/>
            <person name="Uchiumi T."/>
            <person name="Sasamoto S."/>
            <person name="Watanabe A."/>
            <person name="Idesawa K."/>
            <person name="Iriguchi M."/>
            <person name="Kawashima K."/>
            <person name="Kohara M."/>
            <person name="Matsumoto M."/>
            <person name="Shimpo S."/>
            <person name="Tsuruoka H."/>
            <person name="Wada T."/>
            <person name="Yamada M."/>
            <person name="Tabata S."/>
        </authorList>
    </citation>
    <scope>NUCLEOTIDE SEQUENCE [LARGE SCALE GENOMIC DNA]</scope>
    <source>
        <strain>JCM 10833 / BCRC 13528 / IAM 13628 / NBRC 14792 / USDA 110</strain>
    </source>
</reference>
<gene>
    <name type="primary">hupF</name>
    <name type="ordered locus">bsl6938</name>
</gene>
<dbReference type="EMBL" id="Z21948">
    <property type="protein sequence ID" value="CAA79945.1"/>
    <property type="molecule type" value="Genomic_DNA"/>
</dbReference>
<dbReference type="EMBL" id="L24446">
    <property type="protein sequence ID" value="AAD13470.1"/>
    <property type="molecule type" value="Genomic_DNA"/>
</dbReference>
<dbReference type="EMBL" id="BA000040">
    <property type="protein sequence ID" value="BAC52203.1"/>
    <property type="molecule type" value="Genomic_DNA"/>
</dbReference>
<dbReference type="PIR" id="S39402">
    <property type="entry name" value="S39402"/>
</dbReference>
<dbReference type="RefSeq" id="NP_773578.1">
    <property type="nucleotide sequence ID" value="NC_004463.1"/>
</dbReference>
<dbReference type="RefSeq" id="WP_011089676.1">
    <property type="nucleotide sequence ID" value="NC_004463.1"/>
</dbReference>
<dbReference type="SMR" id="Q45252"/>
<dbReference type="STRING" id="224911.AAV28_32280"/>
<dbReference type="EnsemblBacteria" id="BAC52203">
    <property type="protein sequence ID" value="BAC52203"/>
    <property type="gene ID" value="BAC52203"/>
</dbReference>
<dbReference type="GeneID" id="46493904"/>
<dbReference type="KEGG" id="bja:bsl6938"/>
<dbReference type="PATRIC" id="fig|224911.44.peg.6972"/>
<dbReference type="eggNOG" id="COG0298">
    <property type="taxonomic scope" value="Bacteria"/>
</dbReference>
<dbReference type="HOGENOM" id="CLU_159381_0_0_5"/>
<dbReference type="InParanoid" id="Q45252"/>
<dbReference type="OrthoDB" id="9806017at2"/>
<dbReference type="PhylomeDB" id="Q45252"/>
<dbReference type="Proteomes" id="UP000002526">
    <property type="component" value="Chromosome"/>
</dbReference>
<dbReference type="GO" id="GO:1902670">
    <property type="term" value="F:carbon dioxide binding"/>
    <property type="evidence" value="ECO:0000318"/>
    <property type="project" value="GO_Central"/>
</dbReference>
<dbReference type="GO" id="GO:0005506">
    <property type="term" value="F:iron ion binding"/>
    <property type="evidence" value="ECO:0000318"/>
    <property type="project" value="GO_Central"/>
</dbReference>
<dbReference type="GO" id="GO:0051604">
    <property type="term" value="P:protein maturation"/>
    <property type="evidence" value="ECO:0000318"/>
    <property type="project" value="GO_Central"/>
</dbReference>
<dbReference type="Gene3D" id="2.30.30.140">
    <property type="match status" value="1"/>
</dbReference>
<dbReference type="InterPro" id="IPR001109">
    <property type="entry name" value="Hydrogenase_HupF/HypC"/>
</dbReference>
<dbReference type="NCBIfam" id="TIGR00074">
    <property type="entry name" value="hypC_hupF"/>
    <property type="match status" value="1"/>
</dbReference>
<dbReference type="PANTHER" id="PTHR35177">
    <property type="entry name" value="HYDROGENASE MATURATION FACTOR HYBG"/>
    <property type="match status" value="1"/>
</dbReference>
<dbReference type="PANTHER" id="PTHR35177:SF2">
    <property type="entry name" value="HYDROGENASE MATURATION FACTOR HYBG"/>
    <property type="match status" value="1"/>
</dbReference>
<dbReference type="Pfam" id="PF01455">
    <property type="entry name" value="HupF_HypC"/>
    <property type="match status" value="1"/>
</dbReference>
<dbReference type="PRINTS" id="PR00445">
    <property type="entry name" value="HUPFHYPC"/>
</dbReference>
<dbReference type="SUPFAM" id="SSF159127">
    <property type="entry name" value="HupF/HypC-like"/>
    <property type="match status" value="1"/>
</dbReference>
<comment type="similarity">
    <text evidence="1">Belongs to the HupF/HypC family.</text>
</comment>
<keyword id="KW-1185">Reference proteome</keyword>
<name>HUPF_BRADU</name>
<organism>
    <name type="scientific">Bradyrhizobium diazoefficiens (strain JCM 10833 / BCRC 13528 / IAM 13628 / NBRC 14792 / USDA 110)</name>
    <dbReference type="NCBI Taxonomy" id="224911"/>
    <lineage>
        <taxon>Bacteria</taxon>
        <taxon>Pseudomonadati</taxon>
        <taxon>Pseudomonadota</taxon>
        <taxon>Alphaproteobacteria</taxon>
        <taxon>Hyphomicrobiales</taxon>
        <taxon>Nitrobacteraceae</taxon>
        <taxon>Bradyrhizobium</taxon>
    </lineage>
</organism>
<accession>Q45252</accession>
<accession>Q45250</accession>
<feature type="chain" id="PRO_0000201390" description="Hydrogenase expression/formation protein HupF">
    <location>
        <begin position="1"/>
        <end position="98"/>
    </location>
</feature>
<feature type="sequence conflict" description="In Ref. 1; CAA79945." evidence="1" ref="1">
    <original>M</original>
    <variation>V</variation>
    <location>
        <position position="30"/>
    </location>
</feature>
<proteinExistence type="inferred from homology"/>
<sequence length="98" mass="10665">MCLGLPMTIVETDGVSALCAFRGEQRRVSMLLLSNPPVGTHVLVYIDTAIRLLDEEEARLIGAAIDGLGAALDGEDCDRFFADLIDREPQLPAHLRSE</sequence>